<proteinExistence type="predicted"/>
<dbReference type="EMBL" id="AY653733">
    <property type="protein sequence ID" value="AAV50297.1"/>
    <property type="molecule type" value="Genomic_DNA"/>
</dbReference>
<dbReference type="SMR" id="Q5UPA3"/>
<dbReference type="KEGG" id="vg:9924600"/>
<dbReference type="OrthoDB" id="269at10240"/>
<dbReference type="Proteomes" id="UP000001134">
    <property type="component" value="Genome"/>
</dbReference>
<dbReference type="Gene3D" id="1.25.40.20">
    <property type="entry name" value="Ankyrin repeat-containing domain"/>
    <property type="match status" value="2"/>
</dbReference>
<dbReference type="InterPro" id="IPR002110">
    <property type="entry name" value="Ankyrin_rpt"/>
</dbReference>
<dbReference type="InterPro" id="IPR036770">
    <property type="entry name" value="Ankyrin_rpt-contain_sf"/>
</dbReference>
<dbReference type="PANTHER" id="PTHR24188">
    <property type="entry name" value="ANKYRIN REPEAT PROTEIN"/>
    <property type="match status" value="1"/>
</dbReference>
<dbReference type="PANTHER" id="PTHR24188:SF29">
    <property type="entry name" value="GH09064P"/>
    <property type="match status" value="1"/>
</dbReference>
<dbReference type="Pfam" id="PF00023">
    <property type="entry name" value="Ank"/>
    <property type="match status" value="1"/>
</dbReference>
<dbReference type="Pfam" id="PF12796">
    <property type="entry name" value="Ank_2"/>
    <property type="match status" value="1"/>
</dbReference>
<dbReference type="SMART" id="SM00248">
    <property type="entry name" value="ANK"/>
    <property type="match status" value="4"/>
</dbReference>
<dbReference type="SUPFAM" id="SSF48403">
    <property type="entry name" value="Ankyrin repeat"/>
    <property type="match status" value="1"/>
</dbReference>
<dbReference type="PROSITE" id="PS50297">
    <property type="entry name" value="ANK_REP_REGION"/>
    <property type="match status" value="1"/>
</dbReference>
<dbReference type="PROSITE" id="PS50088">
    <property type="entry name" value="ANK_REPEAT"/>
    <property type="match status" value="4"/>
</dbReference>
<reference key="1">
    <citation type="journal article" date="2004" name="Science">
        <title>The 1.2-megabase genome sequence of Mimivirus.</title>
        <authorList>
            <person name="Raoult D."/>
            <person name="Audic S."/>
            <person name="Robert C."/>
            <person name="Abergel C."/>
            <person name="Renesto P."/>
            <person name="Ogata H."/>
            <person name="La Scola B."/>
            <person name="Susan M."/>
            <person name="Claverie J.-M."/>
        </authorList>
    </citation>
    <scope>NUCLEOTIDE SEQUENCE [LARGE SCALE GENOMIC DNA]</scope>
    <source>
        <strain>Rowbotham-Bradford</strain>
    </source>
</reference>
<feature type="chain" id="PRO_0000067134" description="Putative ankyrin repeat protein L22">
    <location>
        <begin position="1"/>
        <end position="122"/>
    </location>
</feature>
<feature type="repeat" description="ANK 1">
    <location>
        <begin position="3"/>
        <end position="32"/>
    </location>
</feature>
<feature type="repeat" description="ANK 2">
    <location>
        <begin position="33"/>
        <end position="62"/>
    </location>
</feature>
<feature type="repeat" description="ANK 3">
    <location>
        <begin position="63"/>
        <end position="92"/>
    </location>
</feature>
<feature type="repeat" description="ANK 4">
    <location>
        <begin position="94"/>
        <end position="122"/>
    </location>
</feature>
<keyword id="KW-0040">ANK repeat</keyword>
<keyword id="KW-1185">Reference proteome</keyword>
<keyword id="KW-0677">Repeat</keyword>
<gene>
    <name type="ordered locus">MIMI_L22</name>
</gene>
<organismHost>
    <name type="scientific">Acanthamoeba polyphaga</name>
    <name type="common">Amoeba</name>
    <dbReference type="NCBI Taxonomy" id="5757"/>
</organismHost>
<name>YL022_MIMIV</name>
<organism>
    <name type="scientific">Acanthamoeba polyphaga mimivirus</name>
    <name type="common">APMV</name>
    <dbReference type="NCBI Taxonomy" id="212035"/>
    <lineage>
        <taxon>Viruses</taxon>
        <taxon>Varidnaviria</taxon>
        <taxon>Bamfordvirae</taxon>
        <taxon>Nucleocytoviricota</taxon>
        <taxon>Megaviricetes</taxon>
        <taxon>Imitervirales</taxon>
        <taxon>Mimiviridae</taxon>
        <taxon>Megamimivirinae</taxon>
        <taxon>Mimivirus</taxon>
        <taxon>Mimivirus bradfordmassiliense</taxon>
    </lineage>
</organism>
<accession>Q5UPA3</accession>
<sequence>MVDNNYAVRLASRNGYIEVVKYLVSIGADIKADDDYAVKWASRYGHLRVVKFLVSQGADIRVNNDYAVQLASENGHFDVVKYLVSQDANIRADDDYAVKLASVNGHVEVVKYLVSQGAVLNQ</sequence>
<protein>
    <recommendedName>
        <fullName>Putative ankyrin repeat protein L22</fullName>
    </recommendedName>
</protein>